<evidence type="ECO:0000255" key="1">
    <source>
        <dbReference type="HAMAP-Rule" id="MF_00291"/>
    </source>
</evidence>
<evidence type="ECO:0000256" key="2">
    <source>
        <dbReference type="SAM" id="MobiDB-lite"/>
    </source>
</evidence>
<evidence type="ECO:0000305" key="3"/>
<organism>
    <name type="scientific">Chlamydia felis (strain Fe/C-56)</name>
    <name type="common">Chlamydophila felis</name>
    <dbReference type="NCBI Taxonomy" id="264202"/>
    <lineage>
        <taxon>Bacteria</taxon>
        <taxon>Pseudomonadati</taxon>
        <taxon>Chlamydiota</taxon>
        <taxon>Chlamydiia</taxon>
        <taxon>Chlamydiales</taxon>
        <taxon>Chlamydiaceae</taxon>
        <taxon>Chlamydia/Chlamydophila group</taxon>
        <taxon>Chlamydia</taxon>
    </lineage>
</organism>
<proteinExistence type="inferred from homology"/>
<accession>Q252Q7</accession>
<name>RS2_CHLFF</name>
<sequence>MEESLCNLSVKDLMEAGAHFGHQTRRWNPKMKLYIFEEKNGLYIINLAKTLYQLRKALPQVCKVIKENKPILFVGTKKQAKCVIKEAAIEAGEYFVAERWLGGMLTNMTTIRNSIKTLDKIEKDLTQNSSYLTKKEIALLAKRHQKLLKNLEGIRYLRKTPGLVIVVDPGYEKIAVAEAKKLGIPVLALVDTNCDPTPIDHVIPCNDDSLKSIRLIISAIKDAIVNTKKKLGVEIVSPIKALTSDEEANSSAEENENRQEDLLAKKYDSSEAN</sequence>
<protein>
    <recommendedName>
        <fullName evidence="1">Small ribosomal subunit protein uS2</fullName>
    </recommendedName>
    <alternativeName>
        <fullName evidence="3">30S ribosomal protein S2</fullName>
    </alternativeName>
</protein>
<comment type="similarity">
    <text evidence="1">Belongs to the universal ribosomal protein uS2 family.</text>
</comment>
<reference key="1">
    <citation type="journal article" date="2006" name="DNA Res.">
        <title>Genome sequence of the cat pathogen, Chlamydophila felis.</title>
        <authorList>
            <person name="Azuma Y."/>
            <person name="Hirakawa H."/>
            <person name="Yamashita A."/>
            <person name="Cai Y."/>
            <person name="Rahman M.A."/>
            <person name="Suzuki H."/>
            <person name="Mitaku S."/>
            <person name="Toh H."/>
            <person name="Goto S."/>
            <person name="Murakami T."/>
            <person name="Sugi K."/>
            <person name="Hayashi H."/>
            <person name="Fukushi H."/>
            <person name="Hattori M."/>
            <person name="Kuhara S."/>
            <person name="Shirai M."/>
        </authorList>
    </citation>
    <scope>NUCLEOTIDE SEQUENCE [LARGE SCALE GENOMIC DNA]</scope>
    <source>
        <strain>Fe/C-56</strain>
    </source>
</reference>
<keyword id="KW-0687">Ribonucleoprotein</keyword>
<keyword id="KW-0689">Ribosomal protein</keyword>
<gene>
    <name evidence="1" type="primary">rpsB</name>
    <name type="ordered locus">CF0959</name>
</gene>
<dbReference type="EMBL" id="AP006861">
    <property type="protein sequence ID" value="BAE81731.1"/>
    <property type="molecule type" value="Genomic_DNA"/>
</dbReference>
<dbReference type="RefSeq" id="WP_011458504.1">
    <property type="nucleotide sequence ID" value="NC_007899.1"/>
</dbReference>
<dbReference type="SMR" id="Q252Q7"/>
<dbReference type="STRING" id="264202.CF0959"/>
<dbReference type="KEGG" id="cfe:CF0959"/>
<dbReference type="eggNOG" id="COG0052">
    <property type="taxonomic scope" value="Bacteria"/>
</dbReference>
<dbReference type="HOGENOM" id="CLU_040318_1_3_0"/>
<dbReference type="OrthoDB" id="9808036at2"/>
<dbReference type="Proteomes" id="UP000001260">
    <property type="component" value="Chromosome"/>
</dbReference>
<dbReference type="GO" id="GO:0022627">
    <property type="term" value="C:cytosolic small ribosomal subunit"/>
    <property type="evidence" value="ECO:0007669"/>
    <property type="project" value="TreeGrafter"/>
</dbReference>
<dbReference type="GO" id="GO:0003735">
    <property type="term" value="F:structural constituent of ribosome"/>
    <property type="evidence" value="ECO:0007669"/>
    <property type="project" value="InterPro"/>
</dbReference>
<dbReference type="GO" id="GO:0006412">
    <property type="term" value="P:translation"/>
    <property type="evidence" value="ECO:0007669"/>
    <property type="project" value="UniProtKB-UniRule"/>
</dbReference>
<dbReference type="CDD" id="cd01425">
    <property type="entry name" value="RPS2"/>
    <property type="match status" value="1"/>
</dbReference>
<dbReference type="Gene3D" id="3.40.50.10490">
    <property type="entry name" value="Glucose-6-phosphate isomerase like protein, domain 1"/>
    <property type="match status" value="1"/>
</dbReference>
<dbReference type="Gene3D" id="1.10.287.610">
    <property type="entry name" value="Helix hairpin bin"/>
    <property type="match status" value="1"/>
</dbReference>
<dbReference type="HAMAP" id="MF_00291_B">
    <property type="entry name" value="Ribosomal_uS2_B"/>
    <property type="match status" value="1"/>
</dbReference>
<dbReference type="InterPro" id="IPR001865">
    <property type="entry name" value="Ribosomal_uS2"/>
</dbReference>
<dbReference type="InterPro" id="IPR005706">
    <property type="entry name" value="Ribosomal_uS2_bac/mit/plastid"/>
</dbReference>
<dbReference type="InterPro" id="IPR018130">
    <property type="entry name" value="Ribosomal_uS2_CS"/>
</dbReference>
<dbReference type="InterPro" id="IPR023591">
    <property type="entry name" value="Ribosomal_uS2_flav_dom_sf"/>
</dbReference>
<dbReference type="NCBIfam" id="TIGR01011">
    <property type="entry name" value="rpsB_bact"/>
    <property type="match status" value="1"/>
</dbReference>
<dbReference type="PANTHER" id="PTHR12534">
    <property type="entry name" value="30S RIBOSOMAL PROTEIN S2 PROKARYOTIC AND ORGANELLAR"/>
    <property type="match status" value="1"/>
</dbReference>
<dbReference type="PANTHER" id="PTHR12534:SF0">
    <property type="entry name" value="SMALL RIBOSOMAL SUBUNIT PROTEIN US2M"/>
    <property type="match status" value="1"/>
</dbReference>
<dbReference type="Pfam" id="PF00318">
    <property type="entry name" value="Ribosomal_S2"/>
    <property type="match status" value="1"/>
</dbReference>
<dbReference type="PRINTS" id="PR00395">
    <property type="entry name" value="RIBOSOMALS2"/>
</dbReference>
<dbReference type="SUPFAM" id="SSF52313">
    <property type="entry name" value="Ribosomal protein S2"/>
    <property type="match status" value="1"/>
</dbReference>
<dbReference type="PROSITE" id="PS00962">
    <property type="entry name" value="RIBOSOMAL_S2_1"/>
    <property type="match status" value="1"/>
</dbReference>
<dbReference type="PROSITE" id="PS00963">
    <property type="entry name" value="RIBOSOMAL_S2_2"/>
    <property type="match status" value="1"/>
</dbReference>
<feature type="chain" id="PRO_1000003927" description="Small ribosomal subunit protein uS2">
    <location>
        <begin position="1"/>
        <end position="273"/>
    </location>
</feature>
<feature type="region of interest" description="Disordered" evidence="2">
    <location>
        <begin position="244"/>
        <end position="273"/>
    </location>
</feature>
<feature type="compositionally biased region" description="Basic and acidic residues" evidence="2">
    <location>
        <begin position="255"/>
        <end position="273"/>
    </location>
</feature>